<accession>Q9VJY6</accession>
<comment type="similarity">
    <text evidence="2">Belongs to the eukaryotic ribosomal protein eL24 family.</text>
</comment>
<keyword id="KW-0002">3D-structure</keyword>
<keyword id="KW-1185">Reference proteome</keyword>
<keyword id="KW-0687">Ribonucleoprotein</keyword>
<keyword id="KW-0689">Ribosomal protein</keyword>
<sequence>MKIGLCAFSGYKIYPGHGKTMVKIDGKSFTFLDKKCERSYLMKRNPRKVTWTVLYRRKHRKGIEEEASKKRTRRTQKFQRAIVGASLAEILAKRNMKPEVRKAQRDQAIKVAKEQKRAVKAAKKAAAPAPAKKSAPKQKAAKVTQKAAPRVGGKR</sequence>
<proteinExistence type="evidence at protein level"/>
<protein>
    <recommendedName>
        <fullName evidence="2">Large ribosomal subunit protein eL24</fullName>
    </recommendedName>
    <alternativeName>
        <fullName>60S ribosomal protein L24</fullName>
    </alternativeName>
</protein>
<reference key="1">
    <citation type="journal article" date="2000" name="Science">
        <title>The genome sequence of Drosophila melanogaster.</title>
        <authorList>
            <person name="Adams M.D."/>
            <person name="Celniker S.E."/>
            <person name="Holt R.A."/>
            <person name="Evans C.A."/>
            <person name="Gocayne J.D."/>
            <person name="Amanatides P.G."/>
            <person name="Scherer S.E."/>
            <person name="Li P.W."/>
            <person name="Hoskins R.A."/>
            <person name="Galle R.F."/>
            <person name="George R.A."/>
            <person name="Lewis S.E."/>
            <person name="Richards S."/>
            <person name="Ashburner M."/>
            <person name="Henderson S.N."/>
            <person name="Sutton G.G."/>
            <person name="Wortman J.R."/>
            <person name="Yandell M.D."/>
            <person name="Zhang Q."/>
            <person name="Chen L.X."/>
            <person name="Brandon R.C."/>
            <person name="Rogers Y.-H.C."/>
            <person name="Blazej R.G."/>
            <person name="Champe M."/>
            <person name="Pfeiffer B.D."/>
            <person name="Wan K.H."/>
            <person name="Doyle C."/>
            <person name="Baxter E.G."/>
            <person name="Helt G."/>
            <person name="Nelson C.R."/>
            <person name="Miklos G.L.G."/>
            <person name="Abril J.F."/>
            <person name="Agbayani A."/>
            <person name="An H.-J."/>
            <person name="Andrews-Pfannkoch C."/>
            <person name="Baldwin D."/>
            <person name="Ballew R.M."/>
            <person name="Basu A."/>
            <person name="Baxendale J."/>
            <person name="Bayraktaroglu L."/>
            <person name="Beasley E.M."/>
            <person name="Beeson K.Y."/>
            <person name="Benos P.V."/>
            <person name="Berman B.P."/>
            <person name="Bhandari D."/>
            <person name="Bolshakov S."/>
            <person name="Borkova D."/>
            <person name="Botchan M.R."/>
            <person name="Bouck J."/>
            <person name="Brokstein P."/>
            <person name="Brottier P."/>
            <person name="Burtis K.C."/>
            <person name="Busam D.A."/>
            <person name="Butler H."/>
            <person name="Cadieu E."/>
            <person name="Center A."/>
            <person name="Chandra I."/>
            <person name="Cherry J.M."/>
            <person name="Cawley S."/>
            <person name="Dahlke C."/>
            <person name="Davenport L.B."/>
            <person name="Davies P."/>
            <person name="de Pablos B."/>
            <person name="Delcher A."/>
            <person name="Deng Z."/>
            <person name="Mays A.D."/>
            <person name="Dew I."/>
            <person name="Dietz S.M."/>
            <person name="Dodson K."/>
            <person name="Doup L.E."/>
            <person name="Downes M."/>
            <person name="Dugan-Rocha S."/>
            <person name="Dunkov B.C."/>
            <person name="Dunn P."/>
            <person name="Durbin K.J."/>
            <person name="Evangelista C.C."/>
            <person name="Ferraz C."/>
            <person name="Ferriera S."/>
            <person name="Fleischmann W."/>
            <person name="Fosler C."/>
            <person name="Gabrielian A.E."/>
            <person name="Garg N.S."/>
            <person name="Gelbart W.M."/>
            <person name="Glasser K."/>
            <person name="Glodek A."/>
            <person name="Gong F."/>
            <person name="Gorrell J.H."/>
            <person name="Gu Z."/>
            <person name="Guan P."/>
            <person name="Harris M."/>
            <person name="Harris N.L."/>
            <person name="Harvey D.A."/>
            <person name="Heiman T.J."/>
            <person name="Hernandez J.R."/>
            <person name="Houck J."/>
            <person name="Hostin D."/>
            <person name="Houston K.A."/>
            <person name="Howland T.J."/>
            <person name="Wei M.-H."/>
            <person name="Ibegwam C."/>
            <person name="Jalali M."/>
            <person name="Kalush F."/>
            <person name="Karpen G.H."/>
            <person name="Ke Z."/>
            <person name="Kennison J.A."/>
            <person name="Ketchum K.A."/>
            <person name="Kimmel B.E."/>
            <person name="Kodira C.D."/>
            <person name="Kraft C.L."/>
            <person name="Kravitz S."/>
            <person name="Kulp D."/>
            <person name="Lai Z."/>
            <person name="Lasko P."/>
            <person name="Lei Y."/>
            <person name="Levitsky A.A."/>
            <person name="Li J.H."/>
            <person name="Li Z."/>
            <person name="Liang Y."/>
            <person name="Lin X."/>
            <person name="Liu X."/>
            <person name="Mattei B."/>
            <person name="McIntosh T.C."/>
            <person name="McLeod M.P."/>
            <person name="McPherson D."/>
            <person name="Merkulov G."/>
            <person name="Milshina N.V."/>
            <person name="Mobarry C."/>
            <person name="Morris J."/>
            <person name="Moshrefi A."/>
            <person name="Mount S.M."/>
            <person name="Moy M."/>
            <person name="Murphy B."/>
            <person name="Murphy L."/>
            <person name="Muzny D.M."/>
            <person name="Nelson D.L."/>
            <person name="Nelson D.R."/>
            <person name="Nelson K.A."/>
            <person name="Nixon K."/>
            <person name="Nusskern D.R."/>
            <person name="Pacleb J.M."/>
            <person name="Palazzolo M."/>
            <person name="Pittman G.S."/>
            <person name="Pan S."/>
            <person name="Pollard J."/>
            <person name="Puri V."/>
            <person name="Reese M.G."/>
            <person name="Reinert K."/>
            <person name="Remington K."/>
            <person name="Saunders R.D.C."/>
            <person name="Scheeler F."/>
            <person name="Shen H."/>
            <person name="Shue B.C."/>
            <person name="Siden-Kiamos I."/>
            <person name="Simpson M."/>
            <person name="Skupski M.P."/>
            <person name="Smith T.J."/>
            <person name="Spier E."/>
            <person name="Spradling A.C."/>
            <person name="Stapleton M."/>
            <person name="Strong R."/>
            <person name="Sun E."/>
            <person name="Svirskas R."/>
            <person name="Tector C."/>
            <person name="Turner R."/>
            <person name="Venter E."/>
            <person name="Wang A.H."/>
            <person name="Wang X."/>
            <person name="Wang Z.-Y."/>
            <person name="Wassarman D.A."/>
            <person name="Weinstock G.M."/>
            <person name="Weissenbach J."/>
            <person name="Williams S.M."/>
            <person name="Woodage T."/>
            <person name="Worley K.C."/>
            <person name="Wu D."/>
            <person name="Yang S."/>
            <person name="Yao Q.A."/>
            <person name="Ye J."/>
            <person name="Yeh R.-F."/>
            <person name="Zaveri J.S."/>
            <person name="Zhan M."/>
            <person name="Zhang G."/>
            <person name="Zhao Q."/>
            <person name="Zheng L."/>
            <person name="Zheng X.H."/>
            <person name="Zhong F.N."/>
            <person name="Zhong W."/>
            <person name="Zhou X."/>
            <person name="Zhu S.C."/>
            <person name="Zhu X."/>
            <person name="Smith H.O."/>
            <person name="Gibbs R.A."/>
            <person name="Myers E.W."/>
            <person name="Rubin G.M."/>
            <person name="Venter J.C."/>
        </authorList>
    </citation>
    <scope>NUCLEOTIDE SEQUENCE [LARGE SCALE GENOMIC DNA]</scope>
    <source>
        <strain>Berkeley</strain>
    </source>
</reference>
<reference key="2">
    <citation type="journal article" date="2002" name="Genome Biol.">
        <title>Annotation of the Drosophila melanogaster euchromatic genome: a systematic review.</title>
        <authorList>
            <person name="Misra S."/>
            <person name="Crosby M.A."/>
            <person name="Mungall C.J."/>
            <person name="Matthews B.B."/>
            <person name="Campbell K.S."/>
            <person name="Hradecky P."/>
            <person name="Huang Y."/>
            <person name="Kaminker J.S."/>
            <person name="Millburn G.H."/>
            <person name="Prochnik S.E."/>
            <person name="Smith C.D."/>
            <person name="Tupy J.L."/>
            <person name="Whitfield E.J."/>
            <person name="Bayraktaroglu L."/>
            <person name="Berman B.P."/>
            <person name="Bettencourt B.R."/>
            <person name="Celniker S.E."/>
            <person name="de Grey A.D.N.J."/>
            <person name="Drysdale R.A."/>
            <person name="Harris N.L."/>
            <person name="Richter J."/>
            <person name="Russo S."/>
            <person name="Schroeder A.J."/>
            <person name="Shu S.Q."/>
            <person name="Stapleton M."/>
            <person name="Yamada C."/>
            <person name="Ashburner M."/>
            <person name="Gelbart W.M."/>
            <person name="Rubin G.M."/>
            <person name="Lewis S.E."/>
        </authorList>
    </citation>
    <scope>GENOME REANNOTATION</scope>
    <source>
        <strain>Berkeley</strain>
    </source>
</reference>
<reference key="3">
    <citation type="journal article" date="2002" name="Genome Biol.">
        <title>A Drosophila full-length cDNA resource.</title>
        <authorList>
            <person name="Stapleton M."/>
            <person name="Carlson J.W."/>
            <person name="Brokstein P."/>
            <person name="Yu C."/>
            <person name="Champe M."/>
            <person name="George R.A."/>
            <person name="Guarin H."/>
            <person name="Kronmiller B."/>
            <person name="Pacleb J.M."/>
            <person name="Park S."/>
            <person name="Wan K.H."/>
            <person name="Rubin G.M."/>
            <person name="Celniker S.E."/>
        </authorList>
    </citation>
    <scope>NUCLEOTIDE SEQUENCE [LARGE SCALE MRNA]</scope>
    <source>
        <strain>Berkeley</strain>
        <tissue>Embryo</tissue>
    </source>
</reference>
<reference key="4">
    <citation type="journal article" date="2013" name="Nature">
        <title>Structures of the human and Drosophila 80S ribosome.</title>
        <authorList>
            <person name="Anger A.M."/>
            <person name="Armache J.P."/>
            <person name="Berninghausen O."/>
            <person name="Habeck M."/>
            <person name="Subklewe M."/>
            <person name="Wilson D.N."/>
            <person name="Beckmann R."/>
        </authorList>
    </citation>
    <scope>STRUCTURE BY ELECTRON MICROSCOPY (6.0 ANGSTROMS) OF THE 80S RIBOSOME</scope>
</reference>
<feature type="chain" id="PRO_0000136878" description="Large ribosomal subunit protein eL24">
    <location>
        <begin position="1"/>
        <end position="155"/>
    </location>
</feature>
<feature type="region of interest" description="Disordered" evidence="1">
    <location>
        <begin position="119"/>
        <end position="155"/>
    </location>
</feature>
<feature type="compositionally biased region" description="Low complexity" evidence="1">
    <location>
        <begin position="124"/>
        <end position="133"/>
    </location>
</feature>
<name>RL24_DROME</name>
<gene>
    <name type="primary">RpL24</name>
    <name type="ORF">CG9282</name>
</gene>
<dbReference type="EMBL" id="AE014134">
    <property type="protein sequence ID" value="AAF53299.1"/>
    <property type="molecule type" value="Genomic_DNA"/>
</dbReference>
<dbReference type="EMBL" id="AY071277">
    <property type="protein sequence ID" value="AAL48899.1"/>
    <property type="molecule type" value="mRNA"/>
</dbReference>
<dbReference type="RefSeq" id="NP_001285895.1">
    <property type="nucleotide sequence ID" value="NM_001298966.1"/>
</dbReference>
<dbReference type="RefSeq" id="NP_001285896.1">
    <property type="nucleotide sequence ID" value="NM_001298967.1"/>
</dbReference>
<dbReference type="RefSeq" id="NP_609649.1">
    <property type="nucleotide sequence ID" value="NM_135805.4"/>
</dbReference>
<dbReference type="PDB" id="4V6W">
    <property type="method" value="EM"/>
    <property type="resolution" value="6.00 A"/>
    <property type="chains" value="CW=1-155"/>
</dbReference>
<dbReference type="PDB" id="6XU6">
    <property type="method" value="EM"/>
    <property type="resolution" value="3.50 A"/>
    <property type="chains" value="CW=2-59"/>
</dbReference>
<dbReference type="PDB" id="6XU7">
    <property type="method" value="EM"/>
    <property type="resolution" value="4.90 A"/>
    <property type="chains" value="CW=2-59"/>
</dbReference>
<dbReference type="PDB" id="6XU8">
    <property type="method" value="EM"/>
    <property type="resolution" value="3.00 A"/>
    <property type="chains" value="CW=2-61"/>
</dbReference>
<dbReference type="PDBsum" id="4V6W"/>
<dbReference type="PDBsum" id="6XU6"/>
<dbReference type="PDBsum" id="6XU7"/>
<dbReference type="PDBsum" id="6XU8"/>
<dbReference type="EMDB" id="EMD-10622"/>
<dbReference type="EMDB" id="EMD-10623"/>
<dbReference type="EMDB" id="EMD-10624"/>
<dbReference type="SMR" id="Q9VJY6"/>
<dbReference type="BioGRID" id="60789">
    <property type="interactions" value="107"/>
</dbReference>
<dbReference type="FunCoup" id="Q9VJY6">
    <property type="interactions" value="1256"/>
</dbReference>
<dbReference type="IntAct" id="Q9VJY6">
    <property type="interactions" value="4"/>
</dbReference>
<dbReference type="MINT" id="Q9VJY6"/>
<dbReference type="STRING" id="7227.FBpp0309565"/>
<dbReference type="PaxDb" id="7227-FBpp0080102"/>
<dbReference type="DNASU" id="34754"/>
<dbReference type="EnsemblMetazoa" id="FBtr0080524">
    <property type="protein sequence ID" value="FBpp0080102"/>
    <property type="gene ID" value="FBgn0032518"/>
</dbReference>
<dbReference type="EnsemblMetazoa" id="FBtr0342637">
    <property type="protein sequence ID" value="FBpp0309565"/>
    <property type="gene ID" value="FBgn0032518"/>
</dbReference>
<dbReference type="EnsemblMetazoa" id="FBtr0345449">
    <property type="protein sequence ID" value="FBpp0311573"/>
    <property type="gene ID" value="FBgn0032518"/>
</dbReference>
<dbReference type="GeneID" id="34754"/>
<dbReference type="KEGG" id="dme:Dmel_CG9282"/>
<dbReference type="AGR" id="FB:FBgn0032518"/>
<dbReference type="CTD" id="6152"/>
<dbReference type="FlyBase" id="FBgn0032518">
    <property type="gene designation" value="RpL24"/>
</dbReference>
<dbReference type="VEuPathDB" id="VectorBase:FBgn0032518"/>
<dbReference type="eggNOG" id="KOG1722">
    <property type="taxonomic scope" value="Eukaryota"/>
</dbReference>
<dbReference type="HOGENOM" id="CLU_106411_1_0_1"/>
<dbReference type="InParanoid" id="Q9VJY6"/>
<dbReference type="OMA" id="PGHGKKM"/>
<dbReference type="OrthoDB" id="1727108at2759"/>
<dbReference type="PhylomeDB" id="Q9VJY6"/>
<dbReference type="Reactome" id="R-DME-156827">
    <property type="pathway name" value="L13a-mediated translational silencing of Ceruloplasmin expression"/>
</dbReference>
<dbReference type="Reactome" id="R-DME-1799339">
    <property type="pathway name" value="SRP-dependent cotranslational protein targeting to membrane"/>
</dbReference>
<dbReference type="Reactome" id="R-DME-72689">
    <property type="pathway name" value="Formation of a pool of free 40S subunits"/>
</dbReference>
<dbReference type="Reactome" id="R-DME-72706">
    <property type="pathway name" value="GTP hydrolysis and joining of the 60S ribosomal subunit"/>
</dbReference>
<dbReference type="Reactome" id="R-DME-975956">
    <property type="pathway name" value="Nonsense Mediated Decay (NMD) independent of the Exon Junction Complex (EJC)"/>
</dbReference>
<dbReference type="Reactome" id="R-DME-975957">
    <property type="pathway name" value="Nonsense Mediated Decay (NMD) enhanced by the Exon Junction Complex (EJC)"/>
</dbReference>
<dbReference type="SignaLink" id="Q9VJY6"/>
<dbReference type="BioGRID-ORCS" id="34754">
    <property type="hits" value="1 hit in 1 CRISPR screen"/>
</dbReference>
<dbReference type="ChiTaRS" id="RpL24">
    <property type="organism name" value="fly"/>
</dbReference>
<dbReference type="GenomeRNAi" id="34754"/>
<dbReference type="PRO" id="PR:Q9VJY6"/>
<dbReference type="Proteomes" id="UP000000803">
    <property type="component" value="Chromosome 2L"/>
</dbReference>
<dbReference type="Bgee" id="FBgn0032518">
    <property type="expression patterns" value="Expressed in wing disc and 295 other cell types or tissues"/>
</dbReference>
<dbReference type="ExpressionAtlas" id="Q9VJY6">
    <property type="expression patterns" value="baseline and differential"/>
</dbReference>
<dbReference type="GO" id="GO:0022625">
    <property type="term" value="C:cytosolic large ribosomal subunit"/>
    <property type="evidence" value="ECO:0000318"/>
    <property type="project" value="GO_Central"/>
</dbReference>
<dbReference type="GO" id="GO:0022626">
    <property type="term" value="C:cytosolic ribosome"/>
    <property type="evidence" value="ECO:0000314"/>
    <property type="project" value="FlyBase"/>
</dbReference>
<dbReference type="GO" id="GO:0003729">
    <property type="term" value="F:mRNA binding"/>
    <property type="evidence" value="ECO:0000318"/>
    <property type="project" value="GO_Central"/>
</dbReference>
<dbReference type="GO" id="GO:0003735">
    <property type="term" value="F:structural constituent of ribosome"/>
    <property type="evidence" value="ECO:0000314"/>
    <property type="project" value="FlyBase"/>
</dbReference>
<dbReference type="GO" id="GO:0002181">
    <property type="term" value="P:cytoplasmic translation"/>
    <property type="evidence" value="ECO:0000318"/>
    <property type="project" value="GO_Central"/>
</dbReference>
<dbReference type="CDD" id="cd00472">
    <property type="entry name" value="Ribosomal_L24e_L24"/>
    <property type="match status" value="1"/>
</dbReference>
<dbReference type="FunFam" id="2.30.170.20:FF:000002">
    <property type="entry name" value="60S ribosomal protein L24"/>
    <property type="match status" value="1"/>
</dbReference>
<dbReference type="Gene3D" id="6.10.250.1270">
    <property type="match status" value="1"/>
</dbReference>
<dbReference type="Gene3D" id="2.30.170.20">
    <property type="entry name" value="Ribosomal protein L24e"/>
    <property type="match status" value="1"/>
</dbReference>
<dbReference type="InterPro" id="IPR038630">
    <property type="entry name" value="L24e/L24_sf"/>
</dbReference>
<dbReference type="InterPro" id="IPR056366">
    <property type="entry name" value="Ribosomal_eL24"/>
</dbReference>
<dbReference type="InterPro" id="IPR000988">
    <property type="entry name" value="Ribosomal_eL24-rel_N"/>
</dbReference>
<dbReference type="InterPro" id="IPR011017">
    <property type="entry name" value="TRASH_dom"/>
</dbReference>
<dbReference type="PANTHER" id="PTHR10792">
    <property type="entry name" value="60S RIBOSOMAL PROTEIN L24"/>
    <property type="match status" value="1"/>
</dbReference>
<dbReference type="PANTHER" id="PTHR10792:SF1">
    <property type="entry name" value="RIBOSOMAL PROTEIN L24"/>
    <property type="match status" value="1"/>
</dbReference>
<dbReference type="Pfam" id="PF01246">
    <property type="entry name" value="Ribosomal_L24e"/>
    <property type="match status" value="1"/>
</dbReference>
<dbReference type="SMART" id="SM00746">
    <property type="entry name" value="TRASH"/>
    <property type="match status" value="1"/>
</dbReference>
<dbReference type="SUPFAM" id="SSF57716">
    <property type="entry name" value="Glucocorticoid receptor-like (DNA-binding domain)"/>
    <property type="match status" value="1"/>
</dbReference>
<organism>
    <name type="scientific">Drosophila melanogaster</name>
    <name type="common">Fruit fly</name>
    <dbReference type="NCBI Taxonomy" id="7227"/>
    <lineage>
        <taxon>Eukaryota</taxon>
        <taxon>Metazoa</taxon>
        <taxon>Ecdysozoa</taxon>
        <taxon>Arthropoda</taxon>
        <taxon>Hexapoda</taxon>
        <taxon>Insecta</taxon>
        <taxon>Pterygota</taxon>
        <taxon>Neoptera</taxon>
        <taxon>Endopterygota</taxon>
        <taxon>Diptera</taxon>
        <taxon>Brachycera</taxon>
        <taxon>Muscomorpha</taxon>
        <taxon>Ephydroidea</taxon>
        <taxon>Drosophilidae</taxon>
        <taxon>Drosophila</taxon>
        <taxon>Sophophora</taxon>
    </lineage>
</organism>
<evidence type="ECO:0000256" key="1">
    <source>
        <dbReference type="SAM" id="MobiDB-lite"/>
    </source>
</evidence>
<evidence type="ECO:0000305" key="2"/>